<evidence type="ECO:0000255" key="1">
    <source>
        <dbReference type="HAMAP-Rule" id="MF_00340"/>
    </source>
</evidence>
<evidence type="ECO:0000305" key="2"/>
<dbReference type="EMBL" id="CP000048">
    <property type="protein sequence ID" value="AAX17202.1"/>
    <property type="molecule type" value="Genomic_DNA"/>
</dbReference>
<dbReference type="RefSeq" id="WP_012422452.1">
    <property type="nucleotide sequence ID" value="NZ_CP073136.1"/>
</dbReference>
<dbReference type="SMR" id="B2S146"/>
<dbReference type="GeneID" id="71843528"/>
<dbReference type="KEGG" id="bhr:BH0703"/>
<dbReference type="HOGENOM" id="CLU_129084_1_0_12"/>
<dbReference type="Proteomes" id="UP000008834">
    <property type="component" value="Chromosome"/>
</dbReference>
<dbReference type="GO" id="GO:0015934">
    <property type="term" value="C:large ribosomal subunit"/>
    <property type="evidence" value="ECO:0007669"/>
    <property type="project" value="InterPro"/>
</dbReference>
<dbReference type="GO" id="GO:0003735">
    <property type="term" value="F:structural constituent of ribosome"/>
    <property type="evidence" value="ECO:0007669"/>
    <property type="project" value="InterPro"/>
</dbReference>
<dbReference type="GO" id="GO:0006412">
    <property type="term" value="P:translation"/>
    <property type="evidence" value="ECO:0007669"/>
    <property type="project" value="UniProtKB-UniRule"/>
</dbReference>
<dbReference type="HAMAP" id="MF_00340">
    <property type="entry name" value="Ribosomal_bL32"/>
    <property type="match status" value="1"/>
</dbReference>
<dbReference type="InterPro" id="IPR002677">
    <property type="entry name" value="Ribosomal_bL32"/>
</dbReference>
<dbReference type="InterPro" id="IPR044957">
    <property type="entry name" value="Ribosomal_bL32_bact"/>
</dbReference>
<dbReference type="InterPro" id="IPR011332">
    <property type="entry name" value="Ribosomal_zn-bd"/>
</dbReference>
<dbReference type="NCBIfam" id="TIGR01031">
    <property type="entry name" value="rpmF_bact"/>
    <property type="match status" value="1"/>
</dbReference>
<dbReference type="PANTHER" id="PTHR35534">
    <property type="entry name" value="50S RIBOSOMAL PROTEIN L32"/>
    <property type="match status" value="1"/>
</dbReference>
<dbReference type="PANTHER" id="PTHR35534:SF1">
    <property type="entry name" value="LARGE RIBOSOMAL SUBUNIT PROTEIN BL32"/>
    <property type="match status" value="1"/>
</dbReference>
<dbReference type="Pfam" id="PF01783">
    <property type="entry name" value="Ribosomal_L32p"/>
    <property type="match status" value="1"/>
</dbReference>
<dbReference type="SUPFAM" id="SSF57829">
    <property type="entry name" value="Zn-binding ribosomal proteins"/>
    <property type="match status" value="1"/>
</dbReference>
<gene>
    <name evidence="1" type="primary">rpmF</name>
    <name type="ordered locus">BH0703</name>
</gene>
<protein>
    <recommendedName>
        <fullName evidence="1">Large ribosomal subunit protein bL32</fullName>
    </recommendedName>
    <alternativeName>
        <fullName evidence="2">50S ribosomal protein L32</fullName>
    </alternativeName>
</protein>
<proteinExistence type="inferred from homology"/>
<accession>B2S146</accession>
<keyword id="KW-0687">Ribonucleoprotein</keyword>
<keyword id="KW-0689">Ribosomal protein</keyword>
<name>RL32_BORHD</name>
<organism>
    <name type="scientific">Borrelia hermsii (strain HS1 / DAH)</name>
    <dbReference type="NCBI Taxonomy" id="314723"/>
    <lineage>
        <taxon>Bacteria</taxon>
        <taxon>Pseudomonadati</taxon>
        <taxon>Spirochaetota</taxon>
        <taxon>Spirochaetia</taxon>
        <taxon>Spirochaetales</taxon>
        <taxon>Borreliaceae</taxon>
        <taxon>Borrelia</taxon>
    </lineage>
</organism>
<sequence length="60" mass="7105">MAVPKFKPSKSRSRTRRSINMRKKIPQLQECSNCGYLVIRHRVCLKCGYYKNIQYLELGL</sequence>
<reference key="1">
    <citation type="submission" date="2004-12" db="EMBL/GenBank/DDBJ databases">
        <title>The genome sequence of Borrelia hermsii and Borrelia turicatae: comparative analysis of two agents of endemic N. America relapsing fever.</title>
        <authorList>
            <person name="Porcella S.F."/>
            <person name="Raffel S.J."/>
            <person name="Schrumpf M.E."/>
            <person name="Montgomery B."/>
            <person name="Smith T."/>
            <person name="Schwan T.G."/>
        </authorList>
    </citation>
    <scope>NUCLEOTIDE SEQUENCE [LARGE SCALE GENOMIC DNA]</scope>
    <source>
        <strain>HS1 / DAH</strain>
    </source>
</reference>
<comment type="similarity">
    <text evidence="1">Belongs to the bacterial ribosomal protein bL32 family.</text>
</comment>
<feature type="chain" id="PRO_1000120093" description="Large ribosomal subunit protein bL32">
    <location>
        <begin position="1"/>
        <end position="60"/>
    </location>
</feature>